<reference key="1">
    <citation type="submission" date="2005-09" db="EMBL/GenBank/DDBJ databases">
        <title>Complete sequence of chromosome 1 of Rhodobacter sphaeroides 2.4.1.</title>
        <authorList>
            <person name="Copeland A."/>
            <person name="Lucas S."/>
            <person name="Lapidus A."/>
            <person name="Barry K."/>
            <person name="Detter J.C."/>
            <person name="Glavina T."/>
            <person name="Hammon N."/>
            <person name="Israni S."/>
            <person name="Pitluck S."/>
            <person name="Richardson P."/>
            <person name="Mackenzie C."/>
            <person name="Choudhary M."/>
            <person name="Larimer F."/>
            <person name="Hauser L.J."/>
            <person name="Land M."/>
            <person name="Donohue T.J."/>
            <person name="Kaplan S."/>
        </authorList>
    </citation>
    <scope>NUCLEOTIDE SEQUENCE [LARGE SCALE GENOMIC DNA]</scope>
    <source>
        <strain>ATCC 17023 / DSM 158 / JCM 6121 / CCUG 31486 / LMG 2827 / NBRC 12203 / NCIMB 8253 / ATH 2.4.1.</strain>
    </source>
</reference>
<evidence type="ECO:0000255" key="1">
    <source>
        <dbReference type="HAMAP-Rule" id="MF_00639"/>
    </source>
</evidence>
<keyword id="KW-0067">ATP-binding</keyword>
<keyword id="KW-0131">Cell cycle</keyword>
<keyword id="KW-0132">Cell division</keyword>
<keyword id="KW-0133">Cell shape</keyword>
<keyword id="KW-0961">Cell wall biogenesis/degradation</keyword>
<keyword id="KW-0963">Cytoplasm</keyword>
<keyword id="KW-0436">Ligase</keyword>
<keyword id="KW-0547">Nucleotide-binding</keyword>
<keyword id="KW-0573">Peptidoglycan synthesis</keyword>
<keyword id="KW-1185">Reference proteome</keyword>
<gene>
    <name evidence="1" type="primary">murD</name>
    <name type="ordered locus">RHOS4_06900</name>
    <name type="ORF">RSP_2103</name>
</gene>
<dbReference type="EC" id="6.3.2.9" evidence="1"/>
<dbReference type="EMBL" id="CP000143">
    <property type="protein sequence ID" value="ABA78258.1"/>
    <property type="molecule type" value="Genomic_DNA"/>
</dbReference>
<dbReference type="RefSeq" id="WP_011337238.1">
    <property type="nucleotide sequence ID" value="NC_007493.2"/>
</dbReference>
<dbReference type="RefSeq" id="YP_352159.1">
    <property type="nucleotide sequence ID" value="NC_007493.2"/>
</dbReference>
<dbReference type="SMR" id="Q3J4M6"/>
<dbReference type="STRING" id="272943.RSP_2103"/>
<dbReference type="EnsemblBacteria" id="ABA78258">
    <property type="protein sequence ID" value="ABA78258"/>
    <property type="gene ID" value="RSP_2103"/>
</dbReference>
<dbReference type="GeneID" id="3719574"/>
<dbReference type="KEGG" id="rsp:RSP_2103"/>
<dbReference type="PATRIC" id="fig|272943.9.peg.996"/>
<dbReference type="eggNOG" id="COG0771">
    <property type="taxonomic scope" value="Bacteria"/>
</dbReference>
<dbReference type="OrthoDB" id="9809796at2"/>
<dbReference type="PhylomeDB" id="Q3J4M6"/>
<dbReference type="UniPathway" id="UPA00219"/>
<dbReference type="Proteomes" id="UP000002703">
    <property type="component" value="Chromosome 1"/>
</dbReference>
<dbReference type="GO" id="GO:0005737">
    <property type="term" value="C:cytoplasm"/>
    <property type="evidence" value="ECO:0007669"/>
    <property type="project" value="UniProtKB-SubCell"/>
</dbReference>
<dbReference type="GO" id="GO:0005524">
    <property type="term" value="F:ATP binding"/>
    <property type="evidence" value="ECO:0007669"/>
    <property type="project" value="UniProtKB-UniRule"/>
</dbReference>
<dbReference type="GO" id="GO:0008764">
    <property type="term" value="F:UDP-N-acetylmuramoylalanine-D-glutamate ligase activity"/>
    <property type="evidence" value="ECO:0007669"/>
    <property type="project" value="UniProtKB-UniRule"/>
</dbReference>
<dbReference type="GO" id="GO:0051301">
    <property type="term" value="P:cell division"/>
    <property type="evidence" value="ECO:0007669"/>
    <property type="project" value="UniProtKB-KW"/>
</dbReference>
<dbReference type="GO" id="GO:0071555">
    <property type="term" value="P:cell wall organization"/>
    <property type="evidence" value="ECO:0007669"/>
    <property type="project" value="UniProtKB-KW"/>
</dbReference>
<dbReference type="GO" id="GO:0009252">
    <property type="term" value="P:peptidoglycan biosynthetic process"/>
    <property type="evidence" value="ECO:0007669"/>
    <property type="project" value="UniProtKB-UniRule"/>
</dbReference>
<dbReference type="GO" id="GO:0008360">
    <property type="term" value="P:regulation of cell shape"/>
    <property type="evidence" value="ECO:0007669"/>
    <property type="project" value="UniProtKB-KW"/>
</dbReference>
<dbReference type="Gene3D" id="3.90.190.20">
    <property type="entry name" value="Mur ligase, C-terminal domain"/>
    <property type="match status" value="1"/>
</dbReference>
<dbReference type="Gene3D" id="3.40.1190.10">
    <property type="entry name" value="Mur-like, catalytic domain"/>
    <property type="match status" value="1"/>
</dbReference>
<dbReference type="Gene3D" id="3.40.50.720">
    <property type="entry name" value="NAD(P)-binding Rossmann-like Domain"/>
    <property type="match status" value="1"/>
</dbReference>
<dbReference type="HAMAP" id="MF_00639">
    <property type="entry name" value="MurD"/>
    <property type="match status" value="1"/>
</dbReference>
<dbReference type="InterPro" id="IPR036565">
    <property type="entry name" value="Mur-like_cat_sf"/>
</dbReference>
<dbReference type="InterPro" id="IPR004101">
    <property type="entry name" value="Mur_ligase_C"/>
</dbReference>
<dbReference type="InterPro" id="IPR036615">
    <property type="entry name" value="Mur_ligase_C_dom_sf"/>
</dbReference>
<dbReference type="InterPro" id="IPR013221">
    <property type="entry name" value="Mur_ligase_cen"/>
</dbReference>
<dbReference type="InterPro" id="IPR005762">
    <property type="entry name" value="MurD"/>
</dbReference>
<dbReference type="NCBIfam" id="TIGR01087">
    <property type="entry name" value="murD"/>
    <property type="match status" value="1"/>
</dbReference>
<dbReference type="PANTHER" id="PTHR43692">
    <property type="entry name" value="UDP-N-ACETYLMURAMOYLALANINE--D-GLUTAMATE LIGASE"/>
    <property type="match status" value="1"/>
</dbReference>
<dbReference type="PANTHER" id="PTHR43692:SF1">
    <property type="entry name" value="UDP-N-ACETYLMURAMOYLALANINE--D-GLUTAMATE LIGASE"/>
    <property type="match status" value="1"/>
</dbReference>
<dbReference type="Pfam" id="PF02875">
    <property type="entry name" value="Mur_ligase_C"/>
    <property type="match status" value="1"/>
</dbReference>
<dbReference type="Pfam" id="PF08245">
    <property type="entry name" value="Mur_ligase_M"/>
    <property type="match status" value="1"/>
</dbReference>
<dbReference type="Pfam" id="PF21799">
    <property type="entry name" value="MurD-like_N"/>
    <property type="match status" value="1"/>
</dbReference>
<dbReference type="SUPFAM" id="SSF51984">
    <property type="entry name" value="MurCD N-terminal domain"/>
    <property type="match status" value="1"/>
</dbReference>
<dbReference type="SUPFAM" id="SSF53623">
    <property type="entry name" value="MurD-like peptide ligases, catalytic domain"/>
    <property type="match status" value="1"/>
</dbReference>
<dbReference type="SUPFAM" id="SSF53244">
    <property type="entry name" value="MurD-like peptide ligases, peptide-binding domain"/>
    <property type="match status" value="1"/>
</dbReference>
<accession>Q3J4M6</accession>
<protein>
    <recommendedName>
        <fullName evidence="1">UDP-N-acetylmuramoylalanine--D-glutamate ligase</fullName>
        <ecNumber evidence="1">6.3.2.9</ecNumber>
    </recommendedName>
    <alternativeName>
        <fullName evidence="1">D-glutamic acid-adding enzyme</fullName>
    </alternativeName>
    <alternativeName>
        <fullName evidence="1">UDP-N-acetylmuramoyl-L-alanyl-D-glutamate synthetase</fullName>
    </alternativeName>
</protein>
<comment type="function">
    <text evidence="1">Cell wall formation. Catalyzes the addition of glutamate to the nucleotide precursor UDP-N-acetylmuramoyl-L-alanine (UMA).</text>
</comment>
<comment type="catalytic activity">
    <reaction evidence="1">
        <text>UDP-N-acetyl-alpha-D-muramoyl-L-alanine + D-glutamate + ATP = UDP-N-acetyl-alpha-D-muramoyl-L-alanyl-D-glutamate + ADP + phosphate + H(+)</text>
        <dbReference type="Rhea" id="RHEA:16429"/>
        <dbReference type="ChEBI" id="CHEBI:15378"/>
        <dbReference type="ChEBI" id="CHEBI:29986"/>
        <dbReference type="ChEBI" id="CHEBI:30616"/>
        <dbReference type="ChEBI" id="CHEBI:43474"/>
        <dbReference type="ChEBI" id="CHEBI:83898"/>
        <dbReference type="ChEBI" id="CHEBI:83900"/>
        <dbReference type="ChEBI" id="CHEBI:456216"/>
        <dbReference type="EC" id="6.3.2.9"/>
    </reaction>
</comment>
<comment type="pathway">
    <text evidence="1">Cell wall biogenesis; peptidoglycan biosynthesis.</text>
</comment>
<comment type="subcellular location">
    <subcellularLocation>
        <location evidence="1">Cytoplasm</location>
    </subcellularLocation>
</comment>
<comment type="similarity">
    <text evidence="1">Belongs to the MurCDEF family.</text>
</comment>
<sequence>MIPVRGLEGRKVAVLGLGRSGLATARALEAGGAEPLLWDDSPEARAKAEGQGFTVTDLTRERAFEGVALLVTSPGIPHLYPAPNPVIARAMAAGVPVDNDIGLFFRSFATRDWDAFDQMPRVVCVTGSNGKSTTTALIHHILSEAGRPTQMAGNIGRGVLDLDPARDGEVVVLELSSYQTDLARALTPDVAVFTNLSPDHLDRHGGMGGYFAAKRRLFAEGGPDRAVIGVDEPEGLYLAGQLSVAPEDDRVIRISAGQKLERFGWSVFARKGFLAEWRKGRQMASIDLRAMPGLPGAHNHQNACAAYAACRTMGLAPRQIEAALASFAGLPHRSQTVGEKGGVRFVNDSKATNVDSAAKALQAFPKIRWIAGGLGKDGGIVALQPHLGSVVKAYLIGHSARDFALQIGATDHEICETMERAVARAAEEAQPGEVVLLAPAAASFDQYPNFEKRGEDFMEKVKALL</sequence>
<proteinExistence type="inferred from homology"/>
<organism>
    <name type="scientific">Cereibacter sphaeroides (strain ATCC 17023 / DSM 158 / JCM 6121 / CCUG 31486 / LMG 2827 / NBRC 12203 / NCIMB 8253 / ATH 2.4.1.)</name>
    <name type="common">Rhodobacter sphaeroides</name>
    <dbReference type="NCBI Taxonomy" id="272943"/>
    <lineage>
        <taxon>Bacteria</taxon>
        <taxon>Pseudomonadati</taxon>
        <taxon>Pseudomonadota</taxon>
        <taxon>Alphaproteobacteria</taxon>
        <taxon>Rhodobacterales</taxon>
        <taxon>Paracoccaceae</taxon>
        <taxon>Cereibacter</taxon>
    </lineage>
</organism>
<feature type="chain" id="PRO_0000257225" description="UDP-N-acetylmuramoylalanine--D-glutamate ligase">
    <location>
        <begin position="1"/>
        <end position="465"/>
    </location>
</feature>
<feature type="binding site" evidence="1">
    <location>
        <begin position="127"/>
        <end position="133"/>
    </location>
    <ligand>
        <name>ATP</name>
        <dbReference type="ChEBI" id="CHEBI:30616"/>
    </ligand>
</feature>
<name>MURD_CERS4</name>